<evidence type="ECO:0000255" key="1">
    <source>
        <dbReference type="HAMAP-Rule" id="MF_00937"/>
    </source>
</evidence>
<evidence type="ECO:0000255" key="2">
    <source>
        <dbReference type="PROSITE-ProRule" id="PRU01384"/>
    </source>
</evidence>
<evidence type="ECO:0000269" key="3">
    <source>
    </source>
</evidence>
<sequence length="800" mass="90998">MSEIIQDLSLEDVLGDRFGRYSKYIIQERALPDVRDGLKPVQRRILYAMYSSGNTHDKNFRKSAKTVGDVIGQYHPHGDSSVYEAMVRLSQDWKLRHVLIEMHGNNGSIDNDPPAAMRYTEAKLSLLAEELLRDINKETVSFIPNYDDTTLEPMVLPSRFPNLLVNGSTGISAGYATDIPPHNLAEVIQATLKYIDNPDITVNQLMKYIKGPDFPTGGIIQGIDGIKKAYESGKGRIIVRSKVEEETLRNGRKQLIITEIPYEVNKSSLVKRIDELRADKKVDGIVEVRDETDRTGLRIAIELKKDVNSESIKNYLYKNSDLQISYNFNMVAISDGRPKLMGIRQIIDSYLNHQIEVVANRTKFELDNAEKRMHIVEGLIKALSILDKVIELIRSSKNKRDAKENLIEVYEFTEEQAEAIVMLQLYRLTNTDIVALEGEHKELEALIKQLRHILDNHDALLNVIKEELNEIKKKFKSERLSLIEAEIEEIKIDKEVMVPSEEVILSMTRHGYIKRTSIRSFNASGVEDIGLKDGDSLLKHQEVNTQDTVLVFTNKGRYLFIPVHKLADIRWKELGQHVSQIVPIEEDEVVINVFNEKDFNTDAFYVFATQNGMIKKSTVPLFKTTRFNKPLIATKVKENDDLISVMRFEKDQLITVITNKGMSLTYNTSELSDTGLRAAGVKSINLKAEDFVVMTEGVSENDTILMATQRGSLKRISFKILQVAKRAQRGITLLKELKKNPHRIVAAHVVTGEHSQYTLYSKSNEEHGLINDIHKSEQYTNGSFIVDTDDFGEVIDMYIS</sequence>
<accession>Q2FYS4</accession>
<accession>P50073</accession>
<accession>P95682</accession>
<accession>P95683</accession>
<protein>
    <recommendedName>
        <fullName evidence="1">DNA topoisomerase 4 subunit A</fullName>
        <ecNumber evidence="1">5.6.2.2</ecNumber>
    </recommendedName>
    <alternativeName>
        <fullName evidence="1">Topoisomerase IV subunit A</fullName>
    </alternativeName>
</protein>
<keyword id="KW-0046">Antibiotic resistance</keyword>
<keyword id="KW-1003">Cell membrane</keyword>
<keyword id="KW-0238">DNA-binding</keyword>
<keyword id="KW-0413">Isomerase</keyword>
<keyword id="KW-0472">Membrane</keyword>
<keyword id="KW-1185">Reference proteome</keyword>
<keyword id="KW-0799">Topoisomerase</keyword>
<organism>
    <name type="scientific">Staphylococcus aureus (strain NCTC 8325 / PS 47)</name>
    <dbReference type="NCBI Taxonomy" id="93061"/>
    <lineage>
        <taxon>Bacteria</taxon>
        <taxon>Bacillati</taxon>
        <taxon>Bacillota</taxon>
        <taxon>Bacilli</taxon>
        <taxon>Bacillales</taxon>
        <taxon>Staphylococcaceae</taxon>
        <taxon>Staphylococcus</taxon>
    </lineage>
</organism>
<reference key="1">
    <citation type="journal article" date="1996" name="Antimicrob. Agents Chemother.">
        <title>Alterations in the DNA topoisomerase IV grlA gene responsible for quinolone resistance in Staphylococcus aureus.</title>
        <authorList>
            <person name="Yamagishi J."/>
            <person name="Kojima T."/>
            <person name="Oyamada Y."/>
            <person name="Fujimoto K."/>
            <person name="Hattori H."/>
            <person name="Nakamura S."/>
            <person name="Inoue M."/>
        </authorList>
    </citation>
    <scope>NUCLEOTIDE SEQUENCE [GENOMIC DNA]</scope>
</reference>
<reference key="2">
    <citation type="book" date="2006" name="Gram positive pathogens, 2nd edition">
        <title>The Staphylococcus aureus NCTC 8325 genome.</title>
        <editorList>
            <person name="Fischetti V."/>
            <person name="Novick R."/>
            <person name="Ferretti J."/>
            <person name="Portnoy D."/>
            <person name="Rood J."/>
        </editorList>
        <authorList>
            <person name="Gillaspy A.F."/>
            <person name="Worrell V."/>
            <person name="Orvis J."/>
            <person name="Roe B.A."/>
            <person name="Dyer D.W."/>
            <person name="Iandolo J.J."/>
        </authorList>
    </citation>
    <scope>NUCLEOTIDE SEQUENCE [LARGE SCALE GENOMIC DNA]</scope>
    <source>
        <strain>NCTC 8325 / PS 47</strain>
    </source>
</reference>
<reference key="3">
    <citation type="journal article" date="1995" name="Antimicrob. Agents Chemother.">
        <title>Analysis of gyrA and grlA mutations in stepwise-selected ciprofloxacin-resistant mutants of Staphylococcus aureus.</title>
        <authorList>
            <person name="Ferrero L."/>
            <person name="Cameron B."/>
            <person name="Crouzet J."/>
        </authorList>
    </citation>
    <scope>MUTAGENESIS OF SER-80 AND GLU-84</scope>
</reference>
<comment type="function">
    <text evidence="1">Topoisomerase IV is essential for chromosome segregation. It relaxes supercoiled DNA. Performs the decatenation events required during the replication of a circular DNA molecule.</text>
</comment>
<comment type="catalytic activity">
    <reaction evidence="1">
        <text>ATP-dependent breakage, passage and rejoining of double-stranded DNA.</text>
        <dbReference type="EC" id="5.6.2.2"/>
    </reaction>
</comment>
<comment type="subunit">
    <text>Heterotetramer composed of ParC and ParE.</text>
</comment>
<comment type="subcellular location">
    <subcellularLocation>
        <location evidence="1">Cell membrane</location>
        <topology evidence="1">Peripheral membrane protein</topology>
    </subcellularLocation>
</comment>
<comment type="similarity">
    <text evidence="1">Belongs to the type II topoisomerase GyrA/ParC subunit family. ParC type 2 subfamily.</text>
</comment>
<name>PARC_STAA8</name>
<dbReference type="EC" id="5.6.2.2" evidence="1"/>
<dbReference type="EMBL" id="D67075">
    <property type="protein sequence ID" value="BAA11087.1"/>
    <property type="molecule type" value="Genomic_DNA"/>
</dbReference>
<dbReference type="EMBL" id="CP000253">
    <property type="protein sequence ID" value="ABD30448.1"/>
    <property type="molecule type" value="Genomic_DNA"/>
</dbReference>
<dbReference type="RefSeq" id="WP_001289569.1">
    <property type="nucleotide sequence ID" value="NZ_LS483365.1"/>
</dbReference>
<dbReference type="RefSeq" id="YP_499880.1">
    <property type="nucleotide sequence ID" value="NC_007795.1"/>
</dbReference>
<dbReference type="SMR" id="Q2FYS4"/>
<dbReference type="STRING" id="93061.SAOUHSC_01352"/>
<dbReference type="BindingDB" id="Q2FYS4"/>
<dbReference type="PaxDb" id="1280-SAXN108_1372"/>
<dbReference type="GeneID" id="3920058"/>
<dbReference type="KEGG" id="sao:SAOUHSC_01352"/>
<dbReference type="PATRIC" id="fig|93061.5.peg.1238"/>
<dbReference type="eggNOG" id="COG0188">
    <property type="taxonomic scope" value="Bacteria"/>
</dbReference>
<dbReference type="HOGENOM" id="CLU_002977_6_1_9"/>
<dbReference type="OrthoDB" id="9806486at2"/>
<dbReference type="PRO" id="PR:Q2FYS4"/>
<dbReference type="Proteomes" id="UP000008816">
    <property type="component" value="Chromosome"/>
</dbReference>
<dbReference type="GO" id="GO:0005694">
    <property type="term" value="C:chromosome"/>
    <property type="evidence" value="ECO:0007669"/>
    <property type="project" value="InterPro"/>
</dbReference>
<dbReference type="GO" id="GO:0005737">
    <property type="term" value="C:cytoplasm"/>
    <property type="evidence" value="ECO:0000318"/>
    <property type="project" value="GO_Central"/>
</dbReference>
<dbReference type="GO" id="GO:0009330">
    <property type="term" value="C:DNA topoisomerase type II (double strand cut, ATP-hydrolyzing) complex"/>
    <property type="evidence" value="ECO:0000318"/>
    <property type="project" value="GO_Central"/>
</dbReference>
<dbReference type="GO" id="GO:0019897">
    <property type="term" value="C:extrinsic component of plasma membrane"/>
    <property type="evidence" value="ECO:0007669"/>
    <property type="project" value="UniProtKB-UniRule"/>
</dbReference>
<dbReference type="GO" id="GO:0005524">
    <property type="term" value="F:ATP binding"/>
    <property type="evidence" value="ECO:0000318"/>
    <property type="project" value="GO_Central"/>
</dbReference>
<dbReference type="GO" id="GO:0003677">
    <property type="term" value="F:DNA binding"/>
    <property type="evidence" value="ECO:0000318"/>
    <property type="project" value="GO_Central"/>
</dbReference>
<dbReference type="GO" id="GO:0034335">
    <property type="term" value="F:DNA negative supercoiling activity"/>
    <property type="evidence" value="ECO:0007669"/>
    <property type="project" value="UniProtKB-ARBA"/>
</dbReference>
<dbReference type="GO" id="GO:0007059">
    <property type="term" value="P:chromosome segregation"/>
    <property type="evidence" value="ECO:0007669"/>
    <property type="project" value="UniProtKB-UniRule"/>
</dbReference>
<dbReference type="GO" id="GO:0006265">
    <property type="term" value="P:DNA topological change"/>
    <property type="evidence" value="ECO:0000318"/>
    <property type="project" value="GO_Central"/>
</dbReference>
<dbReference type="GO" id="GO:0046677">
    <property type="term" value="P:response to antibiotic"/>
    <property type="evidence" value="ECO:0007669"/>
    <property type="project" value="UniProtKB-KW"/>
</dbReference>
<dbReference type="CDD" id="cd00187">
    <property type="entry name" value="TOP4c"/>
    <property type="match status" value="1"/>
</dbReference>
<dbReference type="FunFam" id="1.10.268.10:FF:000001">
    <property type="entry name" value="DNA gyrase subunit A"/>
    <property type="match status" value="1"/>
</dbReference>
<dbReference type="FunFam" id="3.30.1360.40:FF:000002">
    <property type="entry name" value="DNA gyrase subunit A"/>
    <property type="match status" value="1"/>
</dbReference>
<dbReference type="FunFam" id="3.90.199.10:FF:000001">
    <property type="entry name" value="DNA gyrase subunit A"/>
    <property type="match status" value="1"/>
</dbReference>
<dbReference type="FunFam" id="2.120.10.90:FF:000005">
    <property type="entry name" value="DNA topoisomerase 4 subunit A"/>
    <property type="match status" value="1"/>
</dbReference>
<dbReference type="Gene3D" id="3.30.1360.40">
    <property type="match status" value="1"/>
</dbReference>
<dbReference type="Gene3D" id="2.120.10.90">
    <property type="entry name" value="DNA gyrase/topoisomerase IV, subunit A, C-terminal"/>
    <property type="match status" value="1"/>
</dbReference>
<dbReference type="Gene3D" id="3.90.199.10">
    <property type="entry name" value="Topoisomerase II, domain 5"/>
    <property type="match status" value="1"/>
</dbReference>
<dbReference type="Gene3D" id="1.10.268.10">
    <property type="entry name" value="Topoisomerase, domain 3"/>
    <property type="match status" value="1"/>
</dbReference>
<dbReference type="HAMAP" id="MF_00937">
    <property type="entry name" value="ParC_type2"/>
    <property type="match status" value="1"/>
</dbReference>
<dbReference type="InterPro" id="IPR006691">
    <property type="entry name" value="GyrA/parC_rep"/>
</dbReference>
<dbReference type="InterPro" id="IPR035516">
    <property type="entry name" value="Gyrase/topoIV_suA_C"/>
</dbReference>
<dbReference type="InterPro" id="IPR013760">
    <property type="entry name" value="Topo_IIA-like_dom_sf"/>
</dbReference>
<dbReference type="InterPro" id="IPR013758">
    <property type="entry name" value="Topo_IIA_A/C_ab"/>
</dbReference>
<dbReference type="InterPro" id="IPR013757">
    <property type="entry name" value="Topo_IIA_A_a_sf"/>
</dbReference>
<dbReference type="InterPro" id="IPR002205">
    <property type="entry name" value="Topo_IIA_dom_A"/>
</dbReference>
<dbReference type="InterPro" id="IPR005741">
    <property type="entry name" value="TopoIV_A_Gpos"/>
</dbReference>
<dbReference type="InterPro" id="IPR050220">
    <property type="entry name" value="Type_II_DNA_Topoisomerases"/>
</dbReference>
<dbReference type="NCBIfam" id="TIGR01061">
    <property type="entry name" value="parC_Gpos"/>
    <property type="match status" value="1"/>
</dbReference>
<dbReference type="NCBIfam" id="NF004044">
    <property type="entry name" value="PRK05561.1"/>
    <property type="match status" value="1"/>
</dbReference>
<dbReference type="PANTHER" id="PTHR43493">
    <property type="entry name" value="DNA GYRASE/TOPOISOMERASE SUBUNIT A"/>
    <property type="match status" value="1"/>
</dbReference>
<dbReference type="PANTHER" id="PTHR43493:SF9">
    <property type="entry name" value="DNA TOPOISOMERASE 4 SUBUNIT A"/>
    <property type="match status" value="1"/>
</dbReference>
<dbReference type="Pfam" id="PF03989">
    <property type="entry name" value="DNA_gyraseA_C"/>
    <property type="match status" value="5"/>
</dbReference>
<dbReference type="Pfam" id="PF00521">
    <property type="entry name" value="DNA_topoisoIV"/>
    <property type="match status" value="1"/>
</dbReference>
<dbReference type="SMART" id="SM00434">
    <property type="entry name" value="TOP4c"/>
    <property type="match status" value="1"/>
</dbReference>
<dbReference type="SUPFAM" id="SSF101904">
    <property type="entry name" value="GyrA/ParC C-terminal domain-like"/>
    <property type="match status" value="1"/>
</dbReference>
<dbReference type="SUPFAM" id="SSF56719">
    <property type="entry name" value="Type II DNA topoisomerase"/>
    <property type="match status" value="1"/>
</dbReference>
<dbReference type="PROSITE" id="PS52040">
    <property type="entry name" value="TOPO_IIA"/>
    <property type="match status" value="1"/>
</dbReference>
<gene>
    <name evidence="1" type="primary">parC</name>
    <name type="synonym">grlA</name>
    <name type="ordered locus">SAOUHSC_01352</name>
</gene>
<proteinExistence type="evidence at protein level"/>
<feature type="chain" id="PRO_0000249334" description="DNA topoisomerase 4 subunit A">
    <location>
        <begin position="1"/>
        <end position="800"/>
    </location>
</feature>
<feature type="domain" description="Topo IIA-type catalytic" evidence="2">
    <location>
        <begin position="31"/>
        <end position="495"/>
    </location>
</feature>
<feature type="active site" description="O-(5'-phospho-DNA)-tyrosine intermediate" evidence="1">
    <location>
        <position position="119"/>
    </location>
</feature>
<feature type="site" description="Interaction with DNA" evidence="1">
    <location>
        <position position="39"/>
    </location>
</feature>
<feature type="site" description="Interaction with DNA" evidence="1">
    <location>
        <position position="75"/>
    </location>
</feature>
<feature type="site" description="Interaction with DNA" evidence="1">
    <location>
        <position position="77"/>
    </location>
</feature>
<feature type="site" description="Interaction with DNA" evidence="1">
    <location>
        <position position="88"/>
    </location>
</feature>
<feature type="site" description="Interaction with DNA" evidence="1">
    <location>
        <position position="94"/>
    </location>
</feature>
<feature type="site" description="Transition state stabilizer" evidence="1">
    <location>
        <position position="118"/>
    </location>
</feature>
<feature type="mutagenesis site" description="Resistant to fluoroquinolones." evidence="3">
    <original>S</original>
    <variation>F</variation>
    <variation>Y</variation>
    <location>
        <position position="80"/>
    </location>
</feature>
<feature type="mutagenesis site" description="Resistant to fluoroquinolones." evidence="3">
    <original>E</original>
    <variation>K</variation>
    <variation>L</variation>
    <location>
        <position position="84"/>
    </location>
</feature>